<reference key="1">
    <citation type="journal article" date="1996" name="Microbiology">
        <title>Sequence of the 305 degrees-307 degrees region of the Bacillus subtilis chromosome.</title>
        <authorList>
            <person name="Soldo B."/>
            <person name="Lazarevic V."/>
            <person name="Mauel C."/>
            <person name="Karamata D."/>
        </authorList>
    </citation>
    <scope>NUCLEOTIDE SEQUENCE [GENOMIC DNA]</scope>
    <source>
        <strain>168</strain>
    </source>
</reference>
<reference key="2">
    <citation type="journal article" date="1997" name="Nature">
        <title>The complete genome sequence of the Gram-positive bacterium Bacillus subtilis.</title>
        <authorList>
            <person name="Kunst F."/>
            <person name="Ogasawara N."/>
            <person name="Moszer I."/>
            <person name="Albertini A.M."/>
            <person name="Alloni G."/>
            <person name="Azevedo V."/>
            <person name="Bertero M.G."/>
            <person name="Bessieres P."/>
            <person name="Bolotin A."/>
            <person name="Borchert S."/>
            <person name="Borriss R."/>
            <person name="Boursier L."/>
            <person name="Brans A."/>
            <person name="Braun M."/>
            <person name="Brignell S.C."/>
            <person name="Bron S."/>
            <person name="Brouillet S."/>
            <person name="Bruschi C.V."/>
            <person name="Caldwell B."/>
            <person name="Capuano V."/>
            <person name="Carter N.M."/>
            <person name="Choi S.-K."/>
            <person name="Codani J.-J."/>
            <person name="Connerton I.F."/>
            <person name="Cummings N.J."/>
            <person name="Daniel R.A."/>
            <person name="Denizot F."/>
            <person name="Devine K.M."/>
            <person name="Duesterhoeft A."/>
            <person name="Ehrlich S.D."/>
            <person name="Emmerson P.T."/>
            <person name="Entian K.-D."/>
            <person name="Errington J."/>
            <person name="Fabret C."/>
            <person name="Ferrari E."/>
            <person name="Foulger D."/>
            <person name="Fritz C."/>
            <person name="Fujita M."/>
            <person name="Fujita Y."/>
            <person name="Fuma S."/>
            <person name="Galizzi A."/>
            <person name="Galleron N."/>
            <person name="Ghim S.-Y."/>
            <person name="Glaser P."/>
            <person name="Goffeau A."/>
            <person name="Golightly E.J."/>
            <person name="Grandi G."/>
            <person name="Guiseppi G."/>
            <person name="Guy B.J."/>
            <person name="Haga K."/>
            <person name="Haiech J."/>
            <person name="Harwood C.R."/>
            <person name="Henaut A."/>
            <person name="Hilbert H."/>
            <person name="Holsappel S."/>
            <person name="Hosono S."/>
            <person name="Hullo M.-F."/>
            <person name="Itaya M."/>
            <person name="Jones L.-M."/>
            <person name="Joris B."/>
            <person name="Karamata D."/>
            <person name="Kasahara Y."/>
            <person name="Klaerr-Blanchard M."/>
            <person name="Klein C."/>
            <person name="Kobayashi Y."/>
            <person name="Koetter P."/>
            <person name="Koningstein G."/>
            <person name="Krogh S."/>
            <person name="Kumano M."/>
            <person name="Kurita K."/>
            <person name="Lapidus A."/>
            <person name="Lardinois S."/>
            <person name="Lauber J."/>
            <person name="Lazarevic V."/>
            <person name="Lee S.-M."/>
            <person name="Levine A."/>
            <person name="Liu H."/>
            <person name="Masuda S."/>
            <person name="Mauel C."/>
            <person name="Medigue C."/>
            <person name="Medina N."/>
            <person name="Mellado R.P."/>
            <person name="Mizuno M."/>
            <person name="Moestl D."/>
            <person name="Nakai S."/>
            <person name="Noback M."/>
            <person name="Noone D."/>
            <person name="O'Reilly M."/>
            <person name="Ogawa K."/>
            <person name="Ogiwara A."/>
            <person name="Oudega B."/>
            <person name="Park S.-H."/>
            <person name="Parro V."/>
            <person name="Pohl T.M."/>
            <person name="Portetelle D."/>
            <person name="Porwollik S."/>
            <person name="Prescott A.M."/>
            <person name="Presecan E."/>
            <person name="Pujic P."/>
            <person name="Purnelle B."/>
            <person name="Rapoport G."/>
            <person name="Rey M."/>
            <person name="Reynolds S."/>
            <person name="Rieger M."/>
            <person name="Rivolta C."/>
            <person name="Rocha E."/>
            <person name="Roche B."/>
            <person name="Rose M."/>
            <person name="Sadaie Y."/>
            <person name="Sato T."/>
            <person name="Scanlan E."/>
            <person name="Schleich S."/>
            <person name="Schroeter R."/>
            <person name="Scoffone F."/>
            <person name="Sekiguchi J."/>
            <person name="Sekowska A."/>
            <person name="Seror S.J."/>
            <person name="Serror P."/>
            <person name="Shin B.-S."/>
            <person name="Soldo B."/>
            <person name="Sorokin A."/>
            <person name="Tacconi E."/>
            <person name="Takagi T."/>
            <person name="Takahashi H."/>
            <person name="Takemaru K."/>
            <person name="Takeuchi M."/>
            <person name="Tamakoshi A."/>
            <person name="Tanaka T."/>
            <person name="Terpstra P."/>
            <person name="Tognoni A."/>
            <person name="Tosato V."/>
            <person name="Uchiyama S."/>
            <person name="Vandenbol M."/>
            <person name="Vannier F."/>
            <person name="Vassarotti A."/>
            <person name="Viari A."/>
            <person name="Wambutt R."/>
            <person name="Wedler E."/>
            <person name="Wedler H."/>
            <person name="Weitzenegger T."/>
            <person name="Winters P."/>
            <person name="Wipat A."/>
            <person name="Yamamoto H."/>
            <person name="Yamane K."/>
            <person name="Yasumoto K."/>
            <person name="Yata K."/>
            <person name="Yoshida K."/>
            <person name="Yoshikawa H.-F."/>
            <person name="Zumstein E."/>
            <person name="Yoshikawa H."/>
            <person name="Danchin A."/>
        </authorList>
    </citation>
    <scope>NUCLEOTIDE SEQUENCE [LARGE SCALE GENOMIC DNA]</scope>
    <source>
        <strain>168</strain>
    </source>
</reference>
<reference key="3">
    <citation type="journal article" date="1994" name="J. Bacteriol.">
        <title>Identification of flagellar synthesis regulatory and structural genes in a sigma D-dependent operon of Bacillus subtilis.</title>
        <authorList>
            <person name="Mirel D.B."/>
            <person name="Lauer P."/>
            <person name="Chamberlin M.J."/>
        </authorList>
    </citation>
    <scope>NUCLEOTIDE SEQUENCE [GENOMIC DNA] OF 1-129</scope>
    <source>
        <strain>168</strain>
    </source>
</reference>
<gene>
    <name type="primary">flgK</name>
    <name type="ordered locus">BSU35410</name>
</gene>
<name>FLGK_BACSU</name>
<organism>
    <name type="scientific">Bacillus subtilis (strain 168)</name>
    <dbReference type="NCBI Taxonomy" id="224308"/>
    <lineage>
        <taxon>Bacteria</taxon>
        <taxon>Bacillati</taxon>
        <taxon>Bacillota</taxon>
        <taxon>Bacilli</taxon>
        <taxon>Bacillales</taxon>
        <taxon>Bacillaceae</taxon>
        <taxon>Bacillus</taxon>
    </lineage>
</organism>
<dbReference type="EMBL" id="U56901">
    <property type="protein sequence ID" value="AAC44946.1"/>
    <property type="molecule type" value="Genomic_DNA"/>
</dbReference>
<dbReference type="EMBL" id="AL009126">
    <property type="protein sequence ID" value="CAB15558.1"/>
    <property type="molecule type" value="Genomic_DNA"/>
</dbReference>
<dbReference type="EMBL" id="L14437">
    <property type="protein sequence ID" value="AAB59019.1"/>
    <property type="molecule type" value="Genomic_DNA"/>
</dbReference>
<dbReference type="PIR" id="H69622">
    <property type="entry name" value="H69622"/>
</dbReference>
<dbReference type="RefSeq" id="NP_391421.1">
    <property type="nucleotide sequence ID" value="NC_000964.3"/>
</dbReference>
<dbReference type="RefSeq" id="WP_003228001.1">
    <property type="nucleotide sequence ID" value="NZ_OZ025638.1"/>
</dbReference>
<dbReference type="SMR" id="P39810"/>
<dbReference type="FunCoup" id="P39810">
    <property type="interactions" value="139"/>
</dbReference>
<dbReference type="IntAct" id="P39810">
    <property type="interactions" value="1"/>
</dbReference>
<dbReference type="STRING" id="224308.BSU35410"/>
<dbReference type="jPOST" id="P39810"/>
<dbReference type="PaxDb" id="224308-BSU35410"/>
<dbReference type="DNASU" id="936736"/>
<dbReference type="EnsemblBacteria" id="CAB15558">
    <property type="protein sequence ID" value="CAB15558"/>
    <property type="gene ID" value="BSU_35410"/>
</dbReference>
<dbReference type="GeneID" id="936736"/>
<dbReference type="KEGG" id="bsu:BSU35410"/>
<dbReference type="PATRIC" id="fig|224308.179.peg.3832"/>
<dbReference type="eggNOG" id="COG1256">
    <property type="taxonomic scope" value="Bacteria"/>
</dbReference>
<dbReference type="eggNOG" id="COG4786">
    <property type="taxonomic scope" value="Bacteria"/>
</dbReference>
<dbReference type="InParanoid" id="P39810"/>
<dbReference type="OrthoDB" id="9802553at2"/>
<dbReference type="PhylomeDB" id="P39810"/>
<dbReference type="BioCyc" id="BSUB:BSU35410-MONOMER"/>
<dbReference type="Proteomes" id="UP000001570">
    <property type="component" value="Chromosome"/>
</dbReference>
<dbReference type="GO" id="GO:0009424">
    <property type="term" value="C:bacterial-type flagellum hook"/>
    <property type="evidence" value="ECO:0007669"/>
    <property type="project" value="InterPro"/>
</dbReference>
<dbReference type="GO" id="GO:0005576">
    <property type="term" value="C:extracellular region"/>
    <property type="evidence" value="ECO:0007669"/>
    <property type="project" value="UniProtKB-SubCell"/>
</dbReference>
<dbReference type="GO" id="GO:0005198">
    <property type="term" value="F:structural molecule activity"/>
    <property type="evidence" value="ECO:0007669"/>
    <property type="project" value="InterPro"/>
</dbReference>
<dbReference type="GO" id="GO:0044780">
    <property type="term" value="P:bacterial-type flagellum assembly"/>
    <property type="evidence" value="ECO:0000318"/>
    <property type="project" value="GO_Central"/>
</dbReference>
<dbReference type="InterPro" id="IPR001444">
    <property type="entry name" value="Flag_bb_rod_N"/>
</dbReference>
<dbReference type="InterPro" id="IPR019776">
    <property type="entry name" value="Flagellar_basal_body_rod_CS"/>
</dbReference>
<dbReference type="InterPro" id="IPR010930">
    <property type="entry name" value="Flg_bb/hook_C_dom"/>
</dbReference>
<dbReference type="InterPro" id="IPR002371">
    <property type="entry name" value="FlgK"/>
</dbReference>
<dbReference type="InterPro" id="IPR053927">
    <property type="entry name" value="FlgK_helical"/>
</dbReference>
<dbReference type="NCBIfam" id="TIGR02492">
    <property type="entry name" value="flgK_ends"/>
    <property type="match status" value="1"/>
</dbReference>
<dbReference type="PANTHER" id="PTHR30033">
    <property type="entry name" value="FLAGELLAR HOOK-ASSOCIATED PROTEIN 1"/>
    <property type="match status" value="1"/>
</dbReference>
<dbReference type="PANTHER" id="PTHR30033:SF1">
    <property type="entry name" value="FLAGELLAR HOOK-ASSOCIATED PROTEIN 1"/>
    <property type="match status" value="1"/>
</dbReference>
<dbReference type="Pfam" id="PF00460">
    <property type="entry name" value="Flg_bb_rod"/>
    <property type="match status" value="1"/>
</dbReference>
<dbReference type="Pfam" id="PF06429">
    <property type="entry name" value="Flg_bbr_C"/>
    <property type="match status" value="1"/>
</dbReference>
<dbReference type="Pfam" id="PF22638">
    <property type="entry name" value="FlgK_D1"/>
    <property type="match status" value="1"/>
</dbReference>
<dbReference type="PRINTS" id="PR01005">
    <property type="entry name" value="FLGHOOKAP1"/>
</dbReference>
<dbReference type="SUPFAM" id="SSF64518">
    <property type="entry name" value="Phase 1 flagellin"/>
    <property type="match status" value="1"/>
</dbReference>
<dbReference type="PROSITE" id="PS00588">
    <property type="entry name" value="FLAGELLA_BB_ROD"/>
    <property type="match status" value="1"/>
</dbReference>
<evidence type="ECO:0000250" key="1"/>
<evidence type="ECO:0000305" key="2"/>
<comment type="subcellular location">
    <subcellularLocation>
        <location evidence="1">Secreted</location>
    </subcellularLocation>
    <subcellularLocation>
        <location evidence="1">Bacterial flagellum</location>
    </subcellularLocation>
</comment>
<comment type="similarity">
    <text evidence="2">Belongs to the flagella basal body rod proteins family.</text>
</comment>
<sequence>MTSTFMGLETARRALSAQQAALSTTANNVANANTDGYTRQRVSLEATDYFPAVSKNAEKTAGQMGTGVQGKSVERIRDIFLDYQYRLQNNSAGYYDTKAKALSQMEGVLNETDDSGLNSVLNSFWNSLQELSNNTNEESARSVVARKGQAVAETFNYISESLTNVQSNLKAELNTTVLDVNSLLSQLNSLNKQIAQVEPVGLLPNGLYDQRDLLIDKLSSMVDIKVSYNKSGGNALASAEGTVSIEILDKNKQSLGTVLDGKNYEVSELAANYDNETGLVSSISIGDTAVQAESFSSKGSLLGFIESYGYITADGQEKGVYPEMLSDLDNMALEFAKAFNEVHRNGVTKSGEQGGDFFDFTGGETEPAKGAAGKIKVADSIIDSKGANIAFSLTGAANDNANATKLANVLTGKITINGKETSVLDYYAGLIGELGIEAQEANRLASNTETQLNDADINRQQMSAVSLDEEMTNMIQFQHAYNAAARMVTLQDELLDKVINGMGVGGR</sequence>
<protein>
    <recommendedName>
        <fullName>Flagellar hook-associated protein 1</fullName>
        <shortName>HAP1</shortName>
    </recommendedName>
</protein>
<accession>P39810</accession>
<proteinExistence type="inferred from homology"/>
<feature type="chain" id="PRO_0000180858" description="Flagellar hook-associated protein 1">
    <location>
        <begin position="1"/>
        <end position="507"/>
    </location>
</feature>
<keyword id="KW-0975">Bacterial flagellum</keyword>
<keyword id="KW-1185">Reference proteome</keyword>
<keyword id="KW-0964">Secreted</keyword>